<sequence length="419" mass="48978">MFSAVKPLSKYLQFKSIRIYDSVFTIHSRCTVVILLTCSLLLSARQYFGDPIQCISEEKNIEYIQSYCWTMGTYILKLDDFGDQEQALVSPNQEVSYNSAFFSSATTNAPQSSSRVRTRPHFRSSLRRIGEYNEAYARSLSIAEGVGPEIRGQTERQYLRYYQWVIILLLFQSFVFYFPSCLWKVWEGRRLKQLCSEVGDALLSEETYNTRLRMLVKYFTTDYEDMHFCYMAKYVFCEVLNFLISVVNIIVLEVFLNGFWSKYLRALATIPFYDWDRWNRVSSSVFPKIAKCEVLKFGGSGTANVMDNLCILPLNILNEKIFVFLWAWFLLMALMSGLNLLCRLAMICSRYLREQMIRSQLRFMTKRHVKRALRDLTIGDWFLMMKVSVNVNPMLFRDLMQELCELRTSASGSTLESPV</sequence>
<name>INX5_DROME</name>
<reference key="1">
    <citation type="journal article" date="2002" name="Mech. Dev.">
        <title>Gap junctions in Drosophila: developmental expression of the entire innexin gene family.</title>
        <authorList>
            <person name="Stebbings L.A."/>
            <person name="Todman M.G."/>
            <person name="Phillips R."/>
            <person name="Greer C.E."/>
            <person name="Tam J."/>
            <person name="Phelan P."/>
            <person name="Jacobs K."/>
            <person name="Bacon J.P."/>
            <person name="Davies J.A."/>
        </authorList>
    </citation>
    <scope>NUCLEOTIDE SEQUENCE [MRNA]</scope>
    <scope>TISSUE SPECIFICITY</scope>
    <scope>DEVELOPMENTAL STAGE</scope>
</reference>
<reference key="2">
    <citation type="journal article" date="2000" name="Science">
        <title>The genome sequence of Drosophila melanogaster.</title>
        <authorList>
            <person name="Adams M.D."/>
            <person name="Celniker S.E."/>
            <person name="Holt R.A."/>
            <person name="Evans C.A."/>
            <person name="Gocayne J.D."/>
            <person name="Amanatides P.G."/>
            <person name="Scherer S.E."/>
            <person name="Li P.W."/>
            <person name="Hoskins R.A."/>
            <person name="Galle R.F."/>
            <person name="George R.A."/>
            <person name="Lewis S.E."/>
            <person name="Richards S."/>
            <person name="Ashburner M."/>
            <person name="Henderson S.N."/>
            <person name="Sutton G.G."/>
            <person name="Wortman J.R."/>
            <person name="Yandell M.D."/>
            <person name="Zhang Q."/>
            <person name="Chen L.X."/>
            <person name="Brandon R.C."/>
            <person name="Rogers Y.-H.C."/>
            <person name="Blazej R.G."/>
            <person name="Champe M."/>
            <person name="Pfeiffer B.D."/>
            <person name="Wan K.H."/>
            <person name="Doyle C."/>
            <person name="Baxter E.G."/>
            <person name="Helt G."/>
            <person name="Nelson C.R."/>
            <person name="Miklos G.L.G."/>
            <person name="Abril J.F."/>
            <person name="Agbayani A."/>
            <person name="An H.-J."/>
            <person name="Andrews-Pfannkoch C."/>
            <person name="Baldwin D."/>
            <person name="Ballew R.M."/>
            <person name="Basu A."/>
            <person name="Baxendale J."/>
            <person name="Bayraktaroglu L."/>
            <person name="Beasley E.M."/>
            <person name="Beeson K.Y."/>
            <person name="Benos P.V."/>
            <person name="Berman B.P."/>
            <person name="Bhandari D."/>
            <person name="Bolshakov S."/>
            <person name="Borkova D."/>
            <person name="Botchan M.R."/>
            <person name="Bouck J."/>
            <person name="Brokstein P."/>
            <person name="Brottier P."/>
            <person name="Burtis K.C."/>
            <person name="Busam D.A."/>
            <person name="Butler H."/>
            <person name="Cadieu E."/>
            <person name="Center A."/>
            <person name="Chandra I."/>
            <person name="Cherry J.M."/>
            <person name="Cawley S."/>
            <person name="Dahlke C."/>
            <person name="Davenport L.B."/>
            <person name="Davies P."/>
            <person name="de Pablos B."/>
            <person name="Delcher A."/>
            <person name="Deng Z."/>
            <person name="Mays A.D."/>
            <person name="Dew I."/>
            <person name="Dietz S.M."/>
            <person name="Dodson K."/>
            <person name="Doup L.E."/>
            <person name="Downes M."/>
            <person name="Dugan-Rocha S."/>
            <person name="Dunkov B.C."/>
            <person name="Dunn P."/>
            <person name="Durbin K.J."/>
            <person name="Evangelista C.C."/>
            <person name="Ferraz C."/>
            <person name="Ferriera S."/>
            <person name="Fleischmann W."/>
            <person name="Fosler C."/>
            <person name="Gabrielian A.E."/>
            <person name="Garg N.S."/>
            <person name="Gelbart W.M."/>
            <person name="Glasser K."/>
            <person name="Glodek A."/>
            <person name="Gong F."/>
            <person name="Gorrell J.H."/>
            <person name="Gu Z."/>
            <person name="Guan P."/>
            <person name="Harris M."/>
            <person name="Harris N.L."/>
            <person name="Harvey D.A."/>
            <person name="Heiman T.J."/>
            <person name="Hernandez J.R."/>
            <person name="Houck J."/>
            <person name="Hostin D."/>
            <person name="Houston K.A."/>
            <person name="Howland T.J."/>
            <person name="Wei M.-H."/>
            <person name="Ibegwam C."/>
            <person name="Jalali M."/>
            <person name="Kalush F."/>
            <person name="Karpen G.H."/>
            <person name="Ke Z."/>
            <person name="Kennison J.A."/>
            <person name="Ketchum K.A."/>
            <person name="Kimmel B.E."/>
            <person name="Kodira C.D."/>
            <person name="Kraft C.L."/>
            <person name="Kravitz S."/>
            <person name="Kulp D."/>
            <person name="Lai Z."/>
            <person name="Lasko P."/>
            <person name="Lei Y."/>
            <person name="Levitsky A.A."/>
            <person name="Li J.H."/>
            <person name="Li Z."/>
            <person name="Liang Y."/>
            <person name="Lin X."/>
            <person name="Liu X."/>
            <person name="Mattei B."/>
            <person name="McIntosh T.C."/>
            <person name="McLeod M.P."/>
            <person name="McPherson D."/>
            <person name="Merkulov G."/>
            <person name="Milshina N.V."/>
            <person name="Mobarry C."/>
            <person name="Morris J."/>
            <person name="Moshrefi A."/>
            <person name="Mount S.M."/>
            <person name="Moy M."/>
            <person name="Murphy B."/>
            <person name="Murphy L."/>
            <person name="Muzny D.M."/>
            <person name="Nelson D.L."/>
            <person name="Nelson D.R."/>
            <person name="Nelson K.A."/>
            <person name="Nixon K."/>
            <person name="Nusskern D.R."/>
            <person name="Pacleb J.M."/>
            <person name="Palazzolo M."/>
            <person name="Pittman G.S."/>
            <person name="Pan S."/>
            <person name="Pollard J."/>
            <person name="Puri V."/>
            <person name="Reese M.G."/>
            <person name="Reinert K."/>
            <person name="Remington K."/>
            <person name="Saunders R.D.C."/>
            <person name="Scheeler F."/>
            <person name="Shen H."/>
            <person name="Shue B.C."/>
            <person name="Siden-Kiamos I."/>
            <person name="Simpson M."/>
            <person name="Skupski M.P."/>
            <person name="Smith T.J."/>
            <person name="Spier E."/>
            <person name="Spradling A.C."/>
            <person name="Stapleton M."/>
            <person name="Strong R."/>
            <person name="Sun E."/>
            <person name="Svirskas R."/>
            <person name="Tector C."/>
            <person name="Turner R."/>
            <person name="Venter E."/>
            <person name="Wang A.H."/>
            <person name="Wang X."/>
            <person name="Wang Z.-Y."/>
            <person name="Wassarman D.A."/>
            <person name="Weinstock G.M."/>
            <person name="Weissenbach J."/>
            <person name="Williams S.M."/>
            <person name="Woodage T."/>
            <person name="Worley K.C."/>
            <person name="Wu D."/>
            <person name="Yang S."/>
            <person name="Yao Q.A."/>
            <person name="Ye J."/>
            <person name="Yeh R.-F."/>
            <person name="Zaveri J.S."/>
            <person name="Zhan M."/>
            <person name="Zhang G."/>
            <person name="Zhao Q."/>
            <person name="Zheng L."/>
            <person name="Zheng X.H."/>
            <person name="Zhong F.N."/>
            <person name="Zhong W."/>
            <person name="Zhou X."/>
            <person name="Zhu S.C."/>
            <person name="Zhu X."/>
            <person name="Smith H.O."/>
            <person name="Gibbs R.A."/>
            <person name="Myers E.W."/>
            <person name="Rubin G.M."/>
            <person name="Venter J.C."/>
        </authorList>
    </citation>
    <scope>NUCLEOTIDE SEQUENCE [LARGE SCALE GENOMIC DNA]</scope>
    <source>
        <strain>Berkeley</strain>
    </source>
</reference>
<reference key="3">
    <citation type="journal article" date="2002" name="Genome Biol.">
        <title>Annotation of the Drosophila melanogaster euchromatic genome: a systematic review.</title>
        <authorList>
            <person name="Misra S."/>
            <person name="Crosby M.A."/>
            <person name="Mungall C.J."/>
            <person name="Matthews B.B."/>
            <person name="Campbell K.S."/>
            <person name="Hradecky P."/>
            <person name="Huang Y."/>
            <person name="Kaminker J.S."/>
            <person name="Millburn G.H."/>
            <person name="Prochnik S.E."/>
            <person name="Smith C.D."/>
            <person name="Tupy J.L."/>
            <person name="Whitfield E.J."/>
            <person name="Bayraktaroglu L."/>
            <person name="Berman B.P."/>
            <person name="Bettencourt B.R."/>
            <person name="Celniker S.E."/>
            <person name="de Grey A.D.N.J."/>
            <person name="Drysdale R.A."/>
            <person name="Harris N.L."/>
            <person name="Richter J."/>
            <person name="Russo S."/>
            <person name="Schroeder A.J."/>
            <person name="Shu S.Q."/>
            <person name="Stapleton M."/>
            <person name="Yamada C."/>
            <person name="Ashburner M."/>
            <person name="Gelbart W.M."/>
            <person name="Rubin G.M."/>
            <person name="Lewis S.E."/>
        </authorList>
    </citation>
    <scope>GENOME REANNOTATION</scope>
    <source>
        <strain>Berkeley</strain>
    </source>
</reference>
<reference key="4">
    <citation type="submission" date="2007-11" db="EMBL/GenBank/DDBJ databases">
        <authorList>
            <person name="Stapleton M."/>
            <person name="Carlson J."/>
            <person name="Frise E."/>
            <person name="Kapadia B."/>
            <person name="Park S."/>
            <person name="Wan K."/>
            <person name="Yu C."/>
            <person name="Celniker S."/>
        </authorList>
    </citation>
    <scope>NUCLEOTIDE SEQUENCE [LARGE SCALE MRNA]</scope>
    <source>
        <strain>Berkeley</strain>
        <tissue>Testis</tissue>
    </source>
</reference>
<accession>Q9VWL5</accession>
<accession>A8WHD8</accession>
<accession>Q8MZL3</accession>
<dbReference type="EMBL" id="AY057372">
    <property type="protein sequence ID" value="AAL25820.1"/>
    <property type="molecule type" value="mRNA"/>
</dbReference>
<dbReference type="EMBL" id="AE014298">
    <property type="protein sequence ID" value="AAF48923.2"/>
    <property type="molecule type" value="Genomic_DNA"/>
</dbReference>
<dbReference type="EMBL" id="BT031084">
    <property type="protein sequence ID" value="ABX00706.1"/>
    <property type="molecule type" value="mRNA"/>
</dbReference>
<dbReference type="RefSeq" id="NP_573353.2">
    <property type="nucleotide sequence ID" value="NM_133125.3"/>
</dbReference>
<dbReference type="FunCoup" id="Q9VWL5">
    <property type="interactions" value="7"/>
</dbReference>
<dbReference type="STRING" id="7227.FBpp0074467"/>
<dbReference type="PaxDb" id="7227-FBpp0074467"/>
<dbReference type="DNASU" id="32901"/>
<dbReference type="EnsemblMetazoa" id="FBtr0074698">
    <property type="protein sequence ID" value="FBpp0074467"/>
    <property type="gene ID" value="FBgn0030989"/>
</dbReference>
<dbReference type="GeneID" id="32901"/>
<dbReference type="KEGG" id="dme:Dmel_CG7537"/>
<dbReference type="UCSC" id="CG7537-RB">
    <property type="organism name" value="d. melanogaster"/>
</dbReference>
<dbReference type="AGR" id="FB:FBgn0030989"/>
<dbReference type="CTD" id="32901"/>
<dbReference type="FlyBase" id="FBgn0030989">
    <property type="gene designation" value="Inx5"/>
</dbReference>
<dbReference type="VEuPathDB" id="VectorBase:FBgn0030989"/>
<dbReference type="eggNOG" id="ENOG502QR27">
    <property type="taxonomic scope" value="Eukaryota"/>
</dbReference>
<dbReference type="GeneTree" id="ENSGT00530000064205"/>
<dbReference type="HOGENOM" id="CLU_035763_1_1_1"/>
<dbReference type="InParanoid" id="Q9VWL5"/>
<dbReference type="OMA" id="FCYMAKY"/>
<dbReference type="OrthoDB" id="5867527at2759"/>
<dbReference type="PhylomeDB" id="Q9VWL5"/>
<dbReference type="BioGRID-ORCS" id="32901">
    <property type="hits" value="0 hits in 1 CRISPR screen"/>
</dbReference>
<dbReference type="GenomeRNAi" id="32901"/>
<dbReference type="PRO" id="PR:Q9VWL5"/>
<dbReference type="Proteomes" id="UP000000803">
    <property type="component" value="Chromosome X"/>
</dbReference>
<dbReference type="Bgee" id="FBgn0030989">
    <property type="expression patterns" value="Expressed in early-mid elongation-stage spermatid (Drosophila) in testis and 14 other cell types or tissues"/>
</dbReference>
<dbReference type="GO" id="GO:0005921">
    <property type="term" value="C:gap junction"/>
    <property type="evidence" value="ECO:0000314"/>
    <property type="project" value="UniProtKB"/>
</dbReference>
<dbReference type="GO" id="GO:0016020">
    <property type="term" value="C:membrane"/>
    <property type="evidence" value="ECO:0000303"/>
    <property type="project" value="UniProtKB"/>
</dbReference>
<dbReference type="GO" id="GO:0005886">
    <property type="term" value="C:plasma membrane"/>
    <property type="evidence" value="ECO:0000318"/>
    <property type="project" value="GO_Central"/>
</dbReference>
<dbReference type="GO" id="GO:0005243">
    <property type="term" value="F:gap junction channel activity"/>
    <property type="evidence" value="ECO:0000250"/>
    <property type="project" value="FlyBase"/>
</dbReference>
<dbReference type="GO" id="GO:0010496">
    <property type="term" value="P:intercellular transport"/>
    <property type="evidence" value="ECO:0000250"/>
    <property type="project" value="FlyBase"/>
</dbReference>
<dbReference type="GO" id="GO:0034220">
    <property type="term" value="P:monoatomic ion transmembrane transport"/>
    <property type="evidence" value="ECO:0007669"/>
    <property type="project" value="UniProtKB-KW"/>
</dbReference>
<dbReference type="GO" id="GO:0007602">
    <property type="term" value="P:phototransduction"/>
    <property type="evidence" value="ECO:0000318"/>
    <property type="project" value="GO_Central"/>
</dbReference>
<dbReference type="InterPro" id="IPR000990">
    <property type="entry name" value="Innexin"/>
</dbReference>
<dbReference type="PANTHER" id="PTHR11893">
    <property type="entry name" value="INNEXIN"/>
    <property type="match status" value="1"/>
</dbReference>
<dbReference type="PANTHER" id="PTHR11893:SF43">
    <property type="entry name" value="INNEXIN INX4-RELATED"/>
    <property type="match status" value="1"/>
</dbReference>
<dbReference type="Pfam" id="PF00876">
    <property type="entry name" value="Innexin"/>
    <property type="match status" value="1"/>
</dbReference>
<dbReference type="PRINTS" id="PR01262">
    <property type="entry name" value="INNEXIN"/>
</dbReference>
<dbReference type="PROSITE" id="PS51013">
    <property type="entry name" value="PANNEXIN"/>
    <property type="match status" value="1"/>
</dbReference>
<organism>
    <name type="scientific">Drosophila melanogaster</name>
    <name type="common">Fruit fly</name>
    <dbReference type="NCBI Taxonomy" id="7227"/>
    <lineage>
        <taxon>Eukaryota</taxon>
        <taxon>Metazoa</taxon>
        <taxon>Ecdysozoa</taxon>
        <taxon>Arthropoda</taxon>
        <taxon>Hexapoda</taxon>
        <taxon>Insecta</taxon>
        <taxon>Pterygota</taxon>
        <taxon>Neoptera</taxon>
        <taxon>Endopterygota</taxon>
        <taxon>Diptera</taxon>
        <taxon>Brachycera</taxon>
        <taxon>Muscomorpha</taxon>
        <taxon>Ephydroidea</taxon>
        <taxon>Drosophilidae</taxon>
        <taxon>Drosophila</taxon>
        <taxon>Sophophora</taxon>
    </lineage>
</organism>
<protein>
    <recommendedName>
        <fullName>Innexin inx5</fullName>
    </recommendedName>
</protein>
<keyword id="KW-0965">Cell junction</keyword>
<keyword id="KW-1003">Cell membrane</keyword>
<keyword id="KW-0303">Gap junction</keyword>
<keyword id="KW-0407">Ion channel</keyword>
<keyword id="KW-0406">Ion transport</keyword>
<keyword id="KW-0472">Membrane</keyword>
<keyword id="KW-1185">Reference proteome</keyword>
<keyword id="KW-0812">Transmembrane</keyword>
<keyword id="KW-1133">Transmembrane helix</keyword>
<keyword id="KW-0813">Transport</keyword>
<comment type="function">
    <text evidence="1">Structural component of the gap junctions.</text>
</comment>
<comment type="subcellular location">
    <subcellularLocation>
        <location evidence="5">Cell membrane</location>
        <topology evidence="3">Multi-pass membrane protein</topology>
    </subcellularLocation>
    <subcellularLocation>
        <location evidence="1">Cell junction</location>
        <location evidence="1">Gap junction</location>
    </subcellularLocation>
</comment>
<comment type="tissue specificity">
    <text evidence="4">Expressed in the cortex of the pupal CNS and at low levels in the wing imaginal disk.</text>
</comment>
<comment type="developmental stage">
    <text evidence="4">Little or no embryonic expression.</text>
</comment>
<comment type="similarity">
    <text evidence="3">Belongs to the pannexin family.</text>
</comment>
<gene>
    <name type="primary">Inx5</name>
    <name type="ORF">CG7537</name>
</gene>
<proteinExistence type="evidence at transcript level"/>
<feature type="chain" id="PRO_0000208501" description="Innexin inx5">
    <location>
        <begin position="1"/>
        <end position="419"/>
    </location>
</feature>
<feature type="topological domain" description="Cytoplasmic" evidence="2">
    <location>
        <begin position="1"/>
        <end position="21"/>
    </location>
</feature>
<feature type="transmembrane region" description="Helical" evidence="3">
    <location>
        <begin position="22"/>
        <end position="42"/>
    </location>
</feature>
<feature type="topological domain" description="Extracellular" evidence="2">
    <location>
        <begin position="43"/>
        <end position="162"/>
    </location>
</feature>
<feature type="transmembrane region" description="Helical" evidence="3">
    <location>
        <begin position="163"/>
        <end position="183"/>
    </location>
</feature>
<feature type="topological domain" description="Cytoplasmic" evidence="2">
    <location>
        <begin position="184"/>
        <end position="238"/>
    </location>
</feature>
<feature type="transmembrane region" description="Helical" evidence="3">
    <location>
        <begin position="239"/>
        <end position="259"/>
    </location>
</feature>
<feature type="topological domain" description="Extracellular" evidence="2">
    <location>
        <begin position="260"/>
        <end position="320"/>
    </location>
</feature>
<feature type="transmembrane region" description="Helical" evidence="3">
    <location>
        <begin position="321"/>
        <end position="341"/>
    </location>
</feature>
<feature type="topological domain" description="Cytoplasmic" evidence="2">
    <location>
        <begin position="342"/>
        <end position="419"/>
    </location>
</feature>
<evidence type="ECO:0000250" key="1"/>
<evidence type="ECO:0000255" key="2"/>
<evidence type="ECO:0000255" key="3">
    <source>
        <dbReference type="PROSITE-ProRule" id="PRU00351"/>
    </source>
</evidence>
<evidence type="ECO:0000269" key="4">
    <source>
    </source>
</evidence>
<evidence type="ECO:0000305" key="5"/>